<protein>
    <recommendedName>
        <fullName evidence="1">Small ribosomal subunit protein uS9</fullName>
    </recommendedName>
    <alternativeName>
        <fullName evidence="3">30S ribosomal protein S9</fullName>
    </alternativeName>
</protein>
<name>RS9_CHLTA</name>
<keyword id="KW-0687">Ribonucleoprotein</keyword>
<keyword id="KW-0689">Ribosomal protein</keyword>
<proteinExistence type="inferred from homology"/>
<feature type="chain" id="PRO_1000051201" description="Small ribosomal subunit protein uS9">
    <location>
        <begin position="1"/>
        <end position="129"/>
    </location>
</feature>
<feature type="region of interest" description="Disordered" evidence="2">
    <location>
        <begin position="97"/>
        <end position="129"/>
    </location>
</feature>
<feature type="compositionally biased region" description="Basic residues" evidence="2">
    <location>
        <begin position="110"/>
        <end position="129"/>
    </location>
</feature>
<gene>
    <name evidence="1" type="primary">rpsI</name>
    <name type="ordered locus">CTA_0133</name>
</gene>
<dbReference type="EMBL" id="CP000051">
    <property type="protein sequence ID" value="AAX50379.1"/>
    <property type="molecule type" value="Genomic_DNA"/>
</dbReference>
<dbReference type="RefSeq" id="WP_009872271.1">
    <property type="nucleotide sequence ID" value="NC_007429.1"/>
</dbReference>
<dbReference type="SMR" id="Q3KMP3"/>
<dbReference type="KEGG" id="cta:CTA_0133"/>
<dbReference type="HOGENOM" id="CLU_046483_2_1_0"/>
<dbReference type="Proteomes" id="UP000002532">
    <property type="component" value="Chromosome"/>
</dbReference>
<dbReference type="GO" id="GO:0022627">
    <property type="term" value="C:cytosolic small ribosomal subunit"/>
    <property type="evidence" value="ECO:0007669"/>
    <property type="project" value="TreeGrafter"/>
</dbReference>
<dbReference type="GO" id="GO:0003723">
    <property type="term" value="F:RNA binding"/>
    <property type="evidence" value="ECO:0007669"/>
    <property type="project" value="TreeGrafter"/>
</dbReference>
<dbReference type="GO" id="GO:0003735">
    <property type="term" value="F:structural constituent of ribosome"/>
    <property type="evidence" value="ECO:0007669"/>
    <property type="project" value="InterPro"/>
</dbReference>
<dbReference type="GO" id="GO:0006412">
    <property type="term" value="P:translation"/>
    <property type="evidence" value="ECO:0007669"/>
    <property type="project" value="UniProtKB-UniRule"/>
</dbReference>
<dbReference type="FunFam" id="3.30.230.10:FF:000141">
    <property type="entry name" value="30S ribosomal protein S9"/>
    <property type="match status" value="1"/>
</dbReference>
<dbReference type="Gene3D" id="3.30.230.10">
    <property type="match status" value="1"/>
</dbReference>
<dbReference type="HAMAP" id="MF_00532_B">
    <property type="entry name" value="Ribosomal_uS9_B"/>
    <property type="match status" value="1"/>
</dbReference>
<dbReference type="InterPro" id="IPR020568">
    <property type="entry name" value="Ribosomal_Su5_D2-typ_SF"/>
</dbReference>
<dbReference type="InterPro" id="IPR000754">
    <property type="entry name" value="Ribosomal_uS9"/>
</dbReference>
<dbReference type="InterPro" id="IPR023035">
    <property type="entry name" value="Ribosomal_uS9_bac/plastid"/>
</dbReference>
<dbReference type="InterPro" id="IPR020574">
    <property type="entry name" value="Ribosomal_uS9_CS"/>
</dbReference>
<dbReference type="InterPro" id="IPR014721">
    <property type="entry name" value="Ribsml_uS5_D2-typ_fold_subgr"/>
</dbReference>
<dbReference type="NCBIfam" id="NF001099">
    <property type="entry name" value="PRK00132.1"/>
    <property type="match status" value="1"/>
</dbReference>
<dbReference type="PANTHER" id="PTHR21569">
    <property type="entry name" value="RIBOSOMAL PROTEIN S9"/>
    <property type="match status" value="1"/>
</dbReference>
<dbReference type="PANTHER" id="PTHR21569:SF1">
    <property type="entry name" value="SMALL RIBOSOMAL SUBUNIT PROTEIN US9M"/>
    <property type="match status" value="1"/>
</dbReference>
<dbReference type="Pfam" id="PF00380">
    <property type="entry name" value="Ribosomal_S9"/>
    <property type="match status" value="1"/>
</dbReference>
<dbReference type="SUPFAM" id="SSF54211">
    <property type="entry name" value="Ribosomal protein S5 domain 2-like"/>
    <property type="match status" value="1"/>
</dbReference>
<dbReference type="PROSITE" id="PS00360">
    <property type="entry name" value="RIBOSOMAL_S9"/>
    <property type="match status" value="1"/>
</dbReference>
<comment type="similarity">
    <text evidence="1">Belongs to the universal ribosomal protein uS9 family.</text>
</comment>
<evidence type="ECO:0000255" key="1">
    <source>
        <dbReference type="HAMAP-Rule" id="MF_00532"/>
    </source>
</evidence>
<evidence type="ECO:0000256" key="2">
    <source>
        <dbReference type="SAM" id="MobiDB-lite"/>
    </source>
</evidence>
<evidence type="ECO:0000305" key="3"/>
<accession>Q3KMP3</accession>
<sequence length="129" mass="14560">MIQESVATGRRKQAVSSVRLRSGNGKIDVNGKTLEQYFPLEVQRATILAPLRMLGDVNSFDLIIRVSGGGVQGQVIATRLGLARAVLQEKEDMKQELKAQGFLTRDPRKKERKKYGRKKARKSFQFSKR</sequence>
<reference key="1">
    <citation type="journal article" date="2005" name="Infect. Immun.">
        <title>Comparative genomic analysis of Chlamydia trachomatis oculotropic and genitotropic strains.</title>
        <authorList>
            <person name="Carlson J.H."/>
            <person name="Porcella S.F."/>
            <person name="McClarty G."/>
            <person name="Caldwell H.D."/>
        </authorList>
    </citation>
    <scope>NUCLEOTIDE SEQUENCE [LARGE SCALE GENOMIC DNA]</scope>
    <source>
        <strain>ATCC VR-571B / DSM 19440 / HAR-13</strain>
    </source>
</reference>
<organism>
    <name type="scientific">Chlamydia trachomatis serovar A (strain ATCC VR-571B / DSM 19440 / HAR-13)</name>
    <dbReference type="NCBI Taxonomy" id="315277"/>
    <lineage>
        <taxon>Bacteria</taxon>
        <taxon>Pseudomonadati</taxon>
        <taxon>Chlamydiota</taxon>
        <taxon>Chlamydiia</taxon>
        <taxon>Chlamydiales</taxon>
        <taxon>Chlamydiaceae</taxon>
        <taxon>Chlamydia/Chlamydophila group</taxon>
        <taxon>Chlamydia</taxon>
    </lineage>
</organism>